<accession>Q4K8U5</accession>
<sequence length="130" mass="14683">MEKLEKTLEEWRSMLDPEQYNVCRLKGTERPFSGKYNGTKTDGVYHCICCNEPLFDSKAKFDSGCGWPSFYEPIADSAMVEIRDMSHGMIRTEVVCAKCDAHLGHVFPDGPPPTGLRYCINSVCLDLVPR</sequence>
<keyword id="KW-0479">Metal-binding</keyword>
<keyword id="KW-0560">Oxidoreductase</keyword>
<keyword id="KW-0862">Zinc</keyword>
<organism>
    <name type="scientific">Pseudomonas fluorescens (strain ATCC BAA-477 / NRRL B-23932 / Pf-5)</name>
    <dbReference type="NCBI Taxonomy" id="220664"/>
    <lineage>
        <taxon>Bacteria</taxon>
        <taxon>Pseudomonadati</taxon>
        <taxon>Pseudomonadota</taxon>
        <taxon>Gammaproteobacteria</taxon>
        <taxon>Pseudomonadales</taxon>
        <taxon>Pseudomonadaceae</taxon>
        <taxon>Pseudomonas</taxon>
    </lineage>
</organism>
<comment type="catalytic activity">
    <reaction evidence="1">
        <text>L-methionyl-[protein] + [thioredoxin]-disulfide + H2O = L-methionyl-(R)-S-oxide-[protein] + [thioredoxin]-dithiol</text>
        <dbReference type="Rhea" id="RHEA:24164"/>
        <dbReference type="Rhea" id="RHEA-COMP:10698"/>
        <dbReference type="Rhea" id="RHEA-COMP:10700"/>
        <dbReference type="Rhea" id="RHEA-COMP:12313"/>
        <dbReference type="Rhea" id="RHEA-COMP:12314"/>
        <dbReference type="ChEBI" id="CHEBI:15377"/>
        <dbReference type="ChEBI" id="CHEBI:16044"/>
        <dbReference type="ChEBI" id="CHEBI:29950"/>
        <dbReference type="ChEBI" id="CHEBI:45764"/>
        <dbReference type="ChEBI" id="CHEBI:50058"/>
        <dbReference type="EC" id="1.8.4.12"/>
    </reaction>
</comment>
<comment type="cofactor">
    <cofactor evidence="1">
        <name>Zn(2+)</name>
        <dbReference type="ChEBI" id="CHEBI:29105"/>
    </cofactor>
    <text evidence="1">Binds 1 zinc ion per subunit. The zinc ion is important for the structural integrity of the protein.</text>
</comment>
<comment type="similarity">
    <text evidence="1">Belongs to the MsrB Met sulfoxide reductase family.</text>
</comment>
<proteinExistence type="inferred from homology"/>
<protein>
    <recommendedName>
        <fullName evidence="1">Peptide methionine sulfoxide reductase MsrB</fullName>
        <ecNumber evidence="1">1.8.4.12</ecNumber>
    </recommendedName>
    <alternativeName>
        <fullName evidence="1">Peptide-methionine (R)-S-oxide reductase</fullName>
    </alternativeName>
</protein>
<name>MSRB_PSEF5</name>
<dbReference type="EC" id="1.8.4.12" evidence="1"/>
<dbReference type="EMBL" id="CP000076">
    <property type="protein sequence ID" value="AAY93502.1"/>
    <property type="molecule type" value="Genomic_DNA"/>
</dbReference>
<dbReference type="RefSeq" id="WP_011062520.1">
    <property type="nucleotide sequence ID" value="NC_004129.6"/>
</dbReference>
<dbReference type="SMR" id="Q4K8U5"/>
<dbReference type="STRING" id="220664.PFL_4246"/>
<dbReference type="GeneID" id="57477314"/>
<dbReference type="KEGG" id="pfl:PFL_4246"/>
<dbReference type="PATRIC" id="fig|220664.5.peg.4345"/>
<dbReference type="eggNOG" id="COG0229">
    <property type="taxonomic scope" value="Bacteria"/>
</dbReference>
<dbReference type="HOGENOM" id="CLU_031040_8_5_6"/>
<dbReference type="Proteomes" id="UP000008540">
    <property type="component" value="Chromosome"/>
</dbReference>
<dbReference type="GO" id="GO:0005737">
    <property type="term" value="C:cytoplasm"/>
    <property type="evidence" value="ECO:0007669"/>
    <property type="project" value="TreeGrafter"/>
</dbReference>
<dbReference type="GO" id="GO:0033743">
    <property type="term" value="F:peptide-methionine (R)-S-oxide reductase activity"/>
    <property type="evidence" value="ECO:0007669"/>
    <property type="project" value="UniProtKB-UniRule"/>
</dbReference>
<dbReference type="GO" id="GO:0008270">
    <property type="term" value="F:zinc ion binding"/>
    <property type="evidence" value="ECO:0007669"/>
    <property type="project" value="UniProtKB-UniRule"/>
</dbReference>
<dbReference type="GO" id="GO:0030091">
    <property type="term" value="P:protein repair"/>
    <property type="evidence" value="ECO:0007669"/>
    <property type="project" value="InterPro"/>
</dbReference>
<dbReference type="GO" id="GO:0006979">
    <property type="term" value="P:response to oxidative stress"/>
    <property type="evidence" value="ECO:0007669"/>
    <property type="project" value="InterPro"/>
</dbReference>
<dbReference type="FunFam" id="2.170.150.20:FF:000001">
    <property type="entry name" value="Peptide methionine sulfoxide reductase MsrB"/>
    <property type="match status" value="1"/>
</dbReference>
<dbReference type="Gene3D" id="2.170.150.20">
    <property type="entry name" value="Peptide methionine sulfoxide reductase"/>
    <property type="match status" value="1"/>
</dbReference>
<dbReference type="HAMAP" id="MF_01400">
    <property type="entry name" value="MsrB"/>
    <property type="match status" value="1"/>
</dbReference>
<dbReference type="InterPro" id="IPR028427">
    <property type="entry name" value="Met_Sox_Rdtase_MsrB"/>
</dbReference>
<dbReference type="InterPro" id="IPR002579">
    <property type="entry name" value="Met_Sox_Rdtase_MsrB_dom"/>
</dbReference>
<dbReference type="InterPro" id="IPR011057">
    <property type="entry name" value="Mss4-like_sf"/>
</dbReference>
<dbReference type="NCBIfam" id="TIGR00357">
    <property type="entry name" value="peptide-methionine (R)-S-oxide reductase MsrB"/>
    <property type="match status" value="1"/>
</dbReference>
<dbReference type="PANTHER" id="PTHR10173">
    <property type="entry name" value="METHIONINE SULFOXIDE REDUCTASE"/>
    <property type="match status" value="1"/>
</dbReference>
<dbReference type="PANTHER" id="PTHR10173:SF52">
    <property type="entry name" value="METHIONINE-R-SULFOXIDE REDUCTASE B1"/>
    <property type="match status" value="1"/>
</dbReference>
<dbReference type="Pfam" id="PF01641">
    <property type="entry name" value="SelR"/>
    <property type="match status" value="1"/>
</dbReference>
<dbReference type="SUPFAM" id="SSF51316">
    <property type="entry name" value="Mss4-like"/>
    <property type="match status" value="1"/>
</dbReference>
<dbReference type="PROSITE" id="PS51790">
    <property type="entry name" value="MSRB"/>
    <property type="match status" value="1"/>
</dbReference>
<gene>
    <name evidence="1" type="primary">msrB</name>
    <name type="ordered locus">PFL_4246</name>
</gene>
<feature type="chain" id="PRO_1000068285" description="Peptide methionine sulfoxide reductase MsrB">
    <location>
        <begin position="1"/>
        <end position="130"/>
    </location>
</feature>
<feature type="domain" description="MsrB" evidence="2">
    <location>
        <begin position="8"/>
        <end position="130"/>
    </location>
</feature>
<feature type="active site" description="Nucleophile" evidence="2">
    <location>
        <position position="119"/>
    </location>
</feature>
<feature type="binding site" evidence="2">
    <location>
        <position position="47"/>
    </location>
    <ligand>
        <name>Zn(2+)</name>
        <dbReference type="ChEBI" id="CHEBI:29105"/>
    </ligand>
</feature>
<feature type="binding site" evidence="2">
    <location>
        <position position="50"/>
    </location>
    <ligand>
        <name>Zn(2+)</name>
        <dbReference type="ChEBI" id="CHEBI:29105"/>
    </ligand>
</feature>
<feature type="binding site" evidence="2">
    <location>
        <position position="96"/>
    </location>
    <ligand>
        <name>Zn(2+)</name>
        <dbReference type="ChEBI" id="CHEBI:29105"/>
    </ligand>
</feature>
<feature type="binding site" evidence="2">
    <location>
        <position position="99"/>
    </location>
    <ligand>
        <name>Zn(2+)</name>
        <dbReference type="ChEBI" id="CHEBI:29105"/>
    </ligand>
</feature>
<evidence type="ECO:0000255" key="1">
    <source>
        <dbReference type="HAMAP-Rule" id="MF_01400"/>
    </source>
</evidence>
<evidence type="ECO:0000255" key="2">
    <source>
        <dbReference type="PROSITE-ProRule" id="PRU01126"/>
    </source>
</evidence>
<reference key="1">
    <citation type="journal article" date="2005" name="Nat. Biotechnol.">
        <title>Complete genome sequence of the plant commensal Pseudomonas fluorescens Pf-5.</title>
        <authorList>
            <person name="Paulsen I.T."/>
            <person name="Press C.M."/>
            <person name="Ravel J."/>
            <person name="Kobayashi D.Y."/>
            <person name="Myers G.S.A."/>
            <person name="Mavrodi D.V."/>
            <person name="DeBoy R.T."/>
            <person name="Seshadri R."/>
            <person name="Ren Q."/>
            <person name="Madupu R."/>
            <person name="Dodson R.J."/>
            <person name="Durkin A.S."/>
            <person name="Brinkac L.M."/>
            <person name="Daugherty S.C."/>
            <person name="Sullivan S.A."/>
            <person name="Rosovitz M.J."/>
            <person name="Gwinn M.L."/>
            <person name="Zhou L."/>
            <person name="Schneider D.J."/>
            <person name="Cartinhour S.W."/>
            <person name="Nelson W.C."/>
            <person name="Weidman J."/>
            <person name="Watkins K."/>
            <person name="Tran K."/>
            <person name="Khouri H."/>
            <person name="Pierson E.A."/>
            <person name="Pierson L.S. III"/>
            <person name="Thomashow L.S."/>
            <person name="Loper J.E."/>
        </authorList>
    </citation>
    <scope>NUCLEOTIDE SEQUENCE [LARGE SCALE GENOMIC DNA]</scope>
    <source>
        <strain>ATCC BAA-477 / NRRL B-23932 / Pf-5</strain>
    </source>
</reference>